<evidence type="ECO:0000250" key="1">
    <source>
        <dbReference type="UniProtKB" id="Q00802"/>
    </source>
</evidence>
<evidence type="ECO:0000255" key="2"/>
<evidence type="ECO:0000303" key="3">
    <source>
    </source>
</evidence>
<evidence type="ECO:0000305" key="4"/>
<organism>
    <name type="scientific">Bombyx mori</name>
    <name type="common">Silk moth</name>
    <dbReference type="NCBI Taxonomy" id="7091"/>
    <lineage>
        <taxon>Eukaryota</taxon>
        <taxon>Metazoa</taxon>
        <taxon>Ecdysozoa</taxon>
        <taxon>Arthropoda</taxon>
        <taxon>Hexapoda</taxon>
        <taxon>Insecta</taxon>
        <taxon>Pterygota</taxon>
        <taxon>Neoptera</taxon>
        <taxon>Endopterygota</taxon>
        <taxon>Lepidoptera</taxon>
        <taxon>Glossata</taxon>
        <taxon>Ditrysia</taxon>
        <taxon>Bombycoidea</taxon>
        <taxon>Bombycidae</taxon>
        <taxon>Bombycinae</taxon>
        <taxon>Bombyx</taxon>
    </lineage>
</organism>
<dbReference type="EMBL" id="X07553">
    <property type="protein sequence ID" value="CAA30433.1"/>
    <property type="molecule type" value="mRNA"/>
</dbReference>
<dbReference type="EMBL" id="X07553">
    <property type="protein sequence ID" value="CAA30434.1"/>
    <property type="molecule type" value="mRNA"/>
</dbReference>
<dbReference type="PIR" id="S01046">
    <property type="entry name" value="S01046"/>
</dbReference>
<dbReference type="RefSeq" id="NP_001095196.1">
    <property type="nucleotide sequence ID" value="NM_001101726.1"/>
</dbReference>
<dbReference type="SMR" id="P09335"/>
<dbReference type="STRING" id="7091.P09335"/>
<dbReference type="PaxDb" id="7091-BGIBMGA004399-TA"/>
<dbReference type="EnsemblMetazoa" id="NM_001101726.1">
    <property type="protein sequence ID" value="NP_001095196.1"/>
    <property type="gene ID" value="GeneID_693043"/>
</dbReference>
<dbReference type="GeneID" id="693043"/>
<dbReference type="KEGG" id="bmor:693043"/>
<dbReference type="CTD" id="693043"/>
<dbReference type="HOGENOM" id="CLU_053201_2_0_1"/>
<dbReference type="InParanoid" id="P09335"/>
<dbReference type="OrthoDB" id="570492at7088"/>
<dbReference type="Proteomes" id="UP000005204">
    <property type="component" value="Unassembled WGS sequence"/>
</dbReference>
<dbReference type="GO" id="GO:0005576">
    <property type="term" value="C:extracellular region"/>
    <property type="evidence" value="ECO:0007669"/>
    <property type="project" value="UniProtKB-SubCell"/>
</dbReference>
<dbReference type="Gene3D" id="2.80.10.50">
    <property type="match status" value="1"/>
</dbReference>
<dbReference type="Gene3D" id="1.10.10.2400">
    <property type="entry name" value="Lepidopteran low molecular weight (30 kD) lipoprotein, N-terminal domain"/>
    <property type="match status" value="1"/>
</dbReference>
<dbReference type="InterPro" id="IPR004943">
    <property type="entry name" value="Lipoprotein_11"/>
</dbReference>
<dbReference type="InterPro" id="IPR042046">
    <property type="entry name" value="Lipoprotein_11_N"/>
</dbReference>
<dbReference type="Pfam" id="PF03260">
    <property type="entry name" value="Lipoprotein_11"/>
    <property type="match status" value="1"/>
</dbReference>
<protein>
    <recommendedName>
        <fullName evidence="3">Low molecular mass lipoprotein PBMHP-12</fullName>
    </recommendedName>
</protein>
<feature type="signal peptide" evidence="2">
    <location>
        <begin position="1"/>
        <end position="16"/>
    </location>
</feature>
<feature type="chain" id="PRO_0000021601" description="Low molecular mass lipoprotein PBMHP-12">
    <location>
        <begin position="17"/>
        <end position="264"/>
    </location>
</feature>
<comment type="subcellular location">
    <subcellularLocation>
        <location evidence="1">Secreted</location>
    </subcellularLocation>
</comment>
<comment type="miscellaneous">
    <text evidence="4">This lipoprotein belongs to the group of structurally related '30 kDa proteins' that comprise major protein components of the fifth (and last) instar larvae and of pupae.</text>
</comment>
<comment type="similarity">
    <text evidence="4">Belongs to the 30 kDa lipoprotein family.</text>
</comment>
<name>LPP12_BOMMO</name>
<reference key="1">
    <citation type="journal article" date="1988" name="Biochim. Biophys. Acta">
        <title>Structures and expression of mRNAs coding for major plasma proteins of Bombyx mori.</title>
        <authorList>
            <person name="Sakai N."/>
            <person name="Mori S."/>
            <person name="Izumi S."/>
            <person name="Haino-Fukushima K."/>
            <person name="Ogura T."/>
            <person name="Maekawa H."/>
            <person name="Tomino S."/>
        </authorList>
    </citation>
    <scope>NUCLEOTIDE SEQUENCE [MRNA]</scope>
    <source>
        <strain>Tokai X Asahi</strain>
        <tissue>Fat body</tissue>
    </source>
</reference>
<accession>P09335</accession>
<keyword id="KW-0449">Lipoprotein</keyword>
<keyword id="KW-1185">Reference proteome</keyword>
<keyword id="KW-0964">Secreted</keyword>
<keyword id="KW-0732">Signal</keyword>
<sequence>MKLLVVFAMCVPAASAGVVELSADSMSPSNQDLEDKLYNSILTGDYDSAVRKSLEYESQGQGSIVQNVVNNLIIDKRRNTMEYCYKLWVGNGQDIVKKYFPLSFRLIMAGNYVKLIYRNYNLALKLGSTTNPSNERIAYGDGVDKHTDLVSWKFITLWENNRVYFKAHNTKYNQYLKMSTSTCNCNARDRVVYGGNSADSTREQWFFQPAKYENDVLFFIYNRQFNDALELGTIVNASGDRKAVGHDGEVAGLPDIYSWFITPF</sequence>
<proteinExistence type="evidence at transcript level"/>